<name>MEC6_CAEEL</name>
<dbReference type="EMBL" id="AF295927">
    <property type="protein sequence ID" value="AAL83724.1"/>
    <property type="molecule type" value="mRNA"/>
</dbReference>
<dbReference type="EMBL" id="BX284601">
    <property type="protein sequence ID" value="CCD68986.1"/>
    <property type="molecule type" value="Genomic_DNA"/>
</dbReference>
<dbReference type="PIR" id="T15204">
    <property type="entry name" value="T15204"/>
</dbReference>
<dbReference type="RefSeq" id="NP_001370641.1">
    <property type="nucleotide sequence ID" value="NM_001383275.2"/>
</dbReference>
<dbReference type="RefSeq" id="NP_491925.2">
    <property type="nucleotide sequence ID" value="NM_059524.5"/>
</dbReference>
<dbReference type="SMR" id="O01811"/>
<dbReference type="BioGRID" id="37837">
    <property type="interactions" value="4"/>
</dbReference>
<dbReference type="FunCoup" id="O01811">
    <property type="interactions" value="3"/>
</dbReference>
<dbReference type="STRING" id="6239.W02D3.3.2"/>
<dbReference type="TCDB" id="1.A.6.2.2">
    <property type="family name" value="the epithelial na(+) channel (enac) family"/>
</dbReference>
<dbReference type="GlyCosmos" id="O01811">
    <property type="glycosylation" value="1 site, No reported glycans"/>
</dbReference>
<dbReference type="PaxDb" id="6239-W02D3.3"/>
<dbReference type="PeptideAtlas" id="O01811"/>
<dbReference type="EnsemblMetazoa" id="W02D3.3.1">
    <property type="protein sequence ID" value="W02D3.3.1"/>
    <property type="gene ID" value="WBGene00003170"/>
</dbReference>
<dbReference type="EnsemblMetazoa" id="W02D3.3.2">
    <property type="protein sequence ID" value="W02D3.3.2"/>
    <property type="gene ID" value="WBGene00003170"/>
</dbReference>
<dbReference type="EnsemblMetazoa" id="W02D3.3.3">
    <property type="protein sequence ID" value="W02D3.3.3"/>
    <property type="gene ID" value="WBGene00003170"/>
</dbReference>
<dbReference type="GeneID" id="172389"/>
<dbReference type="UCSC" id="W02D3.3">
    <property type="organism name" value="c. elegans"/>
</dbReference>
<dbReference type="AGR" id="WB:WBGene00003170"/>
<dbReference type="WormBase" id="W02D3.3">
    <property type="protein sequence ID" value="CE31080"/>
    <property type="gene ID" value="WBGene00003170"/>
    <property type="gene designation" value="mec-6"/>
</dbReference>
<dbReference type="eggNOG" id="ENOG502S6UP">
    <property type="taxonomic scope" value="Eukaryota"/>
</dbReference>
<dbReference type="GeneTree" id="ENSGT00390000008932"/>
<dbReference type="HOGENOM" id="CLU_049839_1_0_1"/>
<dbReference type="InParanoid" id="O01811"/>
<dbReference type="OMA" id="YEMMLLT"/>
<dbReference type="OrthoDB" id="423498at2759"/>
<dbReference type="PhylomeDB" id="O01811"/>
<dbReference type="Reactome" id="R-CEL-2142688">
    <property type="pathway name" value="Synthesis of 5-eicosatetraenoic acids"/>
</dbReference>
<dbReference type="Reactome" id="R-CEL-9754706">
    <property type="pathway name" value="Atorvastatin ADME"/>
</dbReference>
<dbReference type="PRO" id="PR:O01811"/>
<dbReference type="Proteomes" id="UP000001940">
    <property type="component" value="Chromosome I"/>
</dbReference>
<dbReference type="Bgee" id="WBGene00003170">
    <property type="expression patterns" value="Expressed in embryo and 3 other cell types or tissues"/>
</dbReference>
<dbReference type="GO" id="GO:0030424">
    <property type="term" value="C:axon"/>
    <property type="evidence" value="ECO:0007669"/>
    <property type="project" value="UniProtKB-SubCell"/>
</dbReference>
<dbReference type="GO" id="GO:0005886">
    <property type="term" value="C:plasma membrane"/>
    <property type="evidence" value="ECO:0007669"/>
    <property type="project" value="UniProtKB-SubCell"/>
</dbReference>
<dbReference type="GO" id="GO:0004064">
    <property type="term" value="F:arylesterase activity"/>
    <property type="evidence" value="ECO:0007669"/>
    <property type="project" value="InterPro"/>
</dbReference>
<dbReference type="GO" id="GO:0005272">
    <property type="term" value="F:sodium channel activity"/>
    <property type="evidence" value="ECO:0007669"/>
    <property type="project" value="UniProtKB-KW"/>
</dbReference>
<dbReference type="GO" id="GO:0050976">
    <property type="term" value="P:detection of mechanical stimulus involved in sensory perception of touch"/>
    <property type="evidence" value="ECO:0000315"/>
    <property type="project" value="UniProtKB"/>
</dbReference>
<dbReference type="GO" id="GO:0007638">
    <property type="term" value="P:mechanosensory behavior"/>
    <property type="evidence" value="ECO:0000315"/>
    <property type="project" value="UniProtKB"/>
</dbReference>
<dbReference type="GO" id="GO:1905789">
    <property type="term" value="P:positive regulation of detection of mechanical stimulus involved in sensory perception of touch"/>
    <property type="evidence" value="ECO:0000316"/>
    <property type="project" value="UniProtKB"/>
</dbReference>
<dbReference type="GO" id="GO:1905792">
    <property type="term" value="P:positive regulation of mechanosensory behavior"/>
    <property type="evidence" value="ECO:0000316"/>
    <property type="project" value="UniProtKB"/>
</dbReference>
<dbReference type="GO" id="GO:0006813">
    <property type="term" value="P:potassium ion transport"/>
    <property type="evidence" value="ECO:0007669"/>
    <property type="project" value="UniProtKB-KW"/>
</dbReference>
<dbReference type="GO" id="GO:0009612">
    <property type="term" value="P:response to mechanical stimulus"/>
    <property type="evidence" value="ECO:0000315"/>
    <property type="project" value="WormBase"/>
</dbReference>
<dbReference type="Gene3D" id="2.120.10.30">
    <property type="entry name" value="TolB, C-terminal domain"/>
    <property type="match status" value="1"/>
</dbReference>
<dbReference type="InterPro" id="IPR011042">
    <property type="entry name" value="6-blade_b-propeller_TolB-like"/>
</dbReference>
<dbReference type="InterPro" id="IPR002640">
    <property type="entry name" value="Arylesterase"/>
</dbReference>
<dbReference type="InterPro" id="IPR051288">
    <property type="entry name" value="Serum_paraoxonase/arylesterase"/>
</dbReference>
<dbReference type="PANTHER" id="PTHR11799:SF28">
    <property type="entry name" value="MECHANOSENSORY ABNORMALITY PROTEIN 6"/>
    <property type="match status" value="1"/>
</dbReference>
<dbReference type="PANTHER" id="PTHR11799">
    <property type="entry name" value="PARAOXONASE"/>
    <property type="match status" value="1"/>
</dbReference>
<dbReference type="Pfam" id="PF01731">
    <property type="entry name" value="Arylesterase"/>
    <property type="match status" value="1"/>
</dbReference>
<dbReference type="SUPFAM" id="SSF63829">
    <property type="entry name" value="Calcium-dependent phosphotriesterase"/>
    <property type="match status" value="1"/>
</dbReference>
<evidence type="ECO:0000250" key="1"/>
<evidence type="ECO:0000255" key="2"/>
<evidence type="ECO:0000269" key="3">
    <source>
    </source>
</evidence>
<evidence type="ECO:0000269" key="4">
    <source>
    </source>
</evidence>
<evidence type="ECO:0000305" key="5"/>
<evidence type="ECO:0000312" key="6">
    <source>
        <dbReference type="WormBase" id="W02D3.3"/>
    </source>
</evidence>
<organism>
    <name type="scientific">Caenorhabditis elegans</name>
    <dbReference type="NCBI Taxonomy" id="6239"/>
    <lineage>
        <taxon>Eukaryota</taxon>
        <taxon>Metazoa</taxon>
        <taxon>Ecdysozoa</taxon>
        <taxon>Nematoda</taxon>
        <taxon>Chromadorea</taxon>
        <taxon>Rhabditida</taxon>
        <taxon>Rhabditina</taxon>
        <taxon>Rhabditomorpha</taxon>
        <taxon>Rhabditoidea</taxon>
        <taxon>Rhabditidae</taxon>
        <taxon>Peloderinae</taxon>
        <taxon>Caenorhabditis</taxon>
    </lineage>
</organism>
<keyword id="KW-1003">Cell membrane</keyword>
<keyword id="KW-0966">Cell projection</keyword>
<keyword id="KW-1015">Disulfide bond</keyword>
<keyword id="KW-0325">Glycoprotein</keyword>
<keyword id="KW-0378">Hydrolase</keyword>
<keyword id="KW-0407">Ion channel</keyword>
<keyword id="KW-0406">Ion transport</keyword>
<keyword id="KW-0472">Membrane</keyword>
<keyword id="KW-0523">Neurodegeneration</keyword>
<keyword id="KW-0630">Potassium</keyword>
<keyword id="KW-0633">Potassium transport</keyword>
<keyword id="KW-1185">Reference proteome</keyword>
<keyword id="KW-0915">Sodium</keyword>
<keyword id="KW-0894">Sodium channel</keyword>
<keyword id="KW-0739">Sodium transport</keyword>
<keyword id="KW-0812">Transmembrane</keyword>
<keyword id="KW-1133">Transmembrane helix</keyword>
<keyword id="KW-0813">Transport</keyword>
<comment type="function">
    <text evidence="3 4">Subunit of an amiloride-sensitive cation channel (degenerin channel complex) permeable for sodium, potassium, lithium and N-methylglucamine, and required for mechanosensory transduction (touch sensitivity) (PubMed:12478294). Interacts with degenerin channel proteins and stabilizes the channel (PubMed:12478294). Plays a role in mechanosensory transduction (touch sensitivity) (PubMed:12385749, PubMed:12478294).</text>
</comment>
<comment type="subunit">
    <text evidence="4">Component of a non-voltage-gated amiloride-sensitive cation channel complex (also called the degenerin channel complex) composed of at least the mec-2, mec-4, mec-6 and mec-10 subunits; the complex mediates mechanotransduction in touch cells (PubMed:12478294). Interacts with mec-2, mec-4 and mec-10 (PubMed:12478294).</text>
</comment>
<comment type="subcellular location">
    <subcellularLocation>
        <location evidence="4">Cell membrane</location>
        <topology evidence="4">Single-pass membrane protein</topology>
    </subcellularLocation>
    <subcellularLocation>
        <location evidence="4">Cell projection</location>
        <location evidence="4">Axon</location>
    </subcellularLocation>
    <text evidence="4">Co-localizes with mec-4 in puncta along the axons of touch cell receptor neurons and in muscles.</text>
</comment>
<comment type="tissue specificity">
    <text evidence="4">Expressed in neurons including the six touch receptors, ventral cord motor neurons, HSN, PVD, PVC, IL1, and several neurons near the nerve ring, in the anal ganglion and in the male tail sensory rays, in muscles including the body wall, vulval, intestinal, anal depressor and sphincter muscles, and in the excretory canal.</text>
</comment>
<comment type="PTM">
    <text evidence="4">Glycosylated.</text>
</comment>
<comment type="similarity">
    <text evidence="5">Belongs to the paraoxonase family.</text>
</comment>
<gene>
    <name evidence="6" type="primary">mec-6</name>
    <name evidence="6" type="ORF">W02D3.3</name>
</gene>
<proteinExistence type="evidence at protein level"/>
<sequence>MGLQSAAAHFINRFIIWITIFMVACFLLRLLVVLDLNKRVYNHTPGPCRVLTDNYKGTAGMTYVESQKRVYITLGYGRAHDLKTKTGIAFYKTNRTDGRSQQEMYDLIEMTINWNGYEYKKEFIPTGIDSYSSSNGRVLLYVINAHPNHQCIHFFQIVESSKLNHRKAICDPSFSSLQDIAVVGPDRLFVTNMAAFGRGWAQILEFSLQTGQGAVYYYDGSKLSTAASSLIAPTGIGYDAKRRILYVGSMIRESIFAYKVAKDTTLELLYEMMLLTSPIGVFVESKTGDIWIAAHPVIHESAWHYTHPENQNIHSPSQILRIRIQEEGNSWVTTEPYANDGATISASSSVVFTDEQMLIGSSFGRLLHCDLTHSYIT</sequence>
<protein>
    <recommendedName>
        <fullName>Mechanosensory abnormality protein 6</fullName>
    </recommendedName>
</protein>
<accession>O01811</accession>
<accession>Q8T7S8</accession>
<feature type="chain" id="PRO_0000142347" description="Mechanosensory abnormality protein 6">
    <location>
        <begin position="1"/>
        <end position="377"/>
    </location>
</feature>
<feature type="topological domain" description="Cytoplasmic" evidence="2">
    <location>
        <begin position="1"/>
        <end position="13"/>
    </location>
</feature>
<feature type="transmembrane region" description="Helical" evidence="2">
    <location>
        <begin position="14"/>
        <end position="34"/>
    </location>
</feature>
<feature type="topological domain" description="Extracellular" evidence="2">
    <location>
        <begin position="35"/>
        <end position="377"/>
    </location>
</feature>
<feature type="glycosylation site" description="N-linked (GlcNAc...) asparagine" evidence="2">
    <location>
        <position position="94"/>
    </location>
</feature>
<feature type="disulfide bond" evidence="1">
    <location>
        <begin position="48"/>
        <end position="369"/>
    </location>
</feature>
<feature type="mutagenesis site" description="In u3; does not affect the expression levels. Abolishes amiloride-sensitive current. Completely blocks mec-4(d)-induced degenerations, and abolishes the punctate expression of mec-4 in vivo." evidence="4">
    <original>G</original>
    <variation>R</variation>
    <location>
        <position position="235"/>
    </location>
</feature>
<reference key="1">
    <citation type="journal article" date="2002" name="Nature">
        <title>The mechanosensory protein MEC-6 is a subunit of the C. elegans touch-cell degenerin channel.</title>
        <authorList>
            <person name="Chelur D.S."/>
            <person name="Ernstrom G.G."/>
            <person name="Goodman M.B."/>
            <person name="Yao C.A."/>
            <person name="Chen L."/>
            <person name="O'Hagan R."/>
            <person name="Chalfie M."/>
        </authorList>
    </citation>
    <scope>NUCLEOTIDE SEQUENCE [MRNA]</scope>
    <scope>FUNCTION</scope>
    <scope>SUBCELLULAR LOCATION</scope>
    <scope>TISSUE SPECIFICITY</scope>
    <scope>IDENTIFICATION IN THE DEGENERIN CHANNEL COMPLEX</scope>
    <scope>INTERACTION WITH MEC-2; MEC-4 AND MEC-10</scope>
    <scope>GLYCOSYLATION</scope>
    <scope>MUTAGENESIS OF GLY-235</scope>
</reference>
<reference key="2">
    <citation type="journal article" date="1998" name="Science">
        <title>Genome sequence of the nematode C. elegans: a platform for investigating biology.</title>
        <authorList>
            <consortium name="The C. elegans sequencing consortium"/>
        </authorList>
    </citation>
    <scope>NUCLEOTIDE SEQUENCE [LARGE SCALE GENOMIC DNA]</scope>
    <source>
        <strain>Bristol N2</strain>
    </source>
</reference>
<reference key="3">
    <citation type="journal article" date="2002" name="Mech. Dev.">
        <title>MTD-1, a touch-cell-specific membrane protein with a subtle effect on touch sensitivity.</title>
        <authorList>
            <person name="Zhang Y."/>
            <person name="Chalfie M."/>
        </authorList>
    </citation>
    <scope>FUNCTION</scope>
</reference>